<accession>A4SXQ0</accession>
<feature type="chain" id="PRO_0000371904" description="NADH-quinone oxidoreductase subunit D">
    <location>
        <begin position="1"/>
        <end position="417"/>
    </location>
</feature>
<proteinExistence type="inferred from homology"/>
<protein>
    <recommendedName>
        <fullName evidence="1">NADH-quinone oxidoreductase subunit D</fullName>
        <ecNumber evidence="1">7.1.1.-</ecNumber>
    </recommendedName>
    <alternativeName>
        <fullName evidence="1">NADH dehydrogenase I subunit D</fullName>
    </alternativeName>
    <alternativeName>
        <fullName evidence="1">NDH-1 subunit D</fullName>
    </alternativeName>
</protein>
<keyword id="KW-1003">Cell membrane</keyword>
<keyword id="KW-0472">Membrane</keyword>
<keyword id="KW-0520">NAD</keyword>
<keyword id="KW-0874">Quinone</keyword>
<keyword id="KW-1185">Reference proteome</keyword>
<keyword id="KW-1278">Translocase</keyword>
<keyword id="KW-0813">Transport</keyword>
<keyword id="KW-0830">Ubiquinone</keyword>
<comment type="function">
    <text evidence="1">NDH-1 shuttles electrons from NADH, via FMN and iron-sulfur (Fe-S) centers, to quinones in the respiratory chain. The immediate electron acceptor for the enzyme in this species is believed to be ubiquinone. Couples the redox reaction to proton translocation (for every two electrons transferred, four hydrogen ions are translocated across the cytoplasmic membrane), and thus conserves the redox energy in a proton gradient.</text>
</comment>
<comment type="catalytic activity">
    <reaction evidence="1">
        <text>a quinone + NADH + 5 H(+)(in) = a quinol + NAD(+) + 4 H(+)(out)</text>
        <dbReference type="Rhea" id="RHEA:57888"/>
        <dbReference type="ChEBI" id="CHEBI:15378"/>
        <dbReference type="ChEBI" id="CHEBI:24646"/>
        <dbReference type="ChEBI" id="CHEBI:57540"/>
        <dbReference type="ChEBI" id="CHEBI:57945"/>
        <dbReference type="ChEBI" id="CHEBI:132124"/>
    </reaction>
</comment>
<comment type="subunit">
    <text evidence="1">NDH-1 is composed of 14 different subunits. Subunits NuoB, C, D, E, F, and G constitute the peripheral sector of the complex.</text>
</comment>
<comment type="subcellular location">
    <subcellularLocation>
        <location evidence="1">Cell membrane</location>
        <topology evidence="1">Peripheral membrane protein</topology>
        <orientation evidence="1">Cytoplasmic side</orientation>
    </subcellularLocation>
</comment>
<comment type="similarity">
    <text evidence="1">Belongs to the complex I 49 kDa subunit family.</text>
</comment>
<organism>
    <name type="scientific">Polynucleobacter asymbioticus (strain DSM 18221 / CIP 109841 / QLW-P1DMWA-1)</name>
    <name type="common">Polynucleobacter necessarius subsp. asymbioticus</name>
    <dbReference type="NCBI Taxonomy" id="312153"/>
    <lineage>
        <taxon>Bacteria</taxon>
        <taxon>Pseudomonadati</taxon>
        <taxon>Pseudomonadota</taxon>
        <taxon>Betaproteobacteria</taxon>
        <taxon>Burkholderiales</taxon>
        <taxon>Burkholderiaceae</taxon>
        <taxon>Polynucleobacter</taxon>
    </lineage>
</organism>
<sequence length="417" mass="47816">MTKIKNYTLNFGPQHPAAHGVLRLVLELDGEVIQRADPHIGLLHRATEKLAETRTWIQNVPYMDRLDYVSMMSNEHAYVLAIEKLLQVDVPLRAQYIRVMFDELTRLLNHLLWIGCHGLDVGAMAVFLYAFRDREDIFDMYEAVSGARMHAAYYRPGGVYRDLPDQMAQYSKSKIRSASAIKRLNENRSGTLLDFIDQFTNGFDANVDEYCNLLTDNRIWKQRLVNIGIVTPERALQLGFTGPMLRGSGIEWDLRKKQPYEVYDRLDFDIPVGVNGDSYDRYLVRMEEMRQSNRIIKQCVAWLKANSGPVMSDNHKVSPPKRVDMKTNMEELIHHFKLFTEGMHVPNGEAYSAVEHPKGEFGIYLISDGANKPYRMKIRAPGFVHLSAMDEMSRGHMLADAVTIIGTQDIVFGEIDR</sequence>
<evidence type="ECO:0000255" key="1">
    <source>
        <dbReference type="HAMAP-Rule" id="MF_01358"/>
    </source>
</evidence>
<dbReference type="EC" id="7.1.1.-" evidence="1"/>
<dbReference type="EMBL" id="CP000655">
    <property type="protein sequence ID" value="ABP34264.1"/>
    <property type="molecule type" value="Genomic_DNA"/>
</dbReference>
<dbReference type="RefSeq" id="WP_011902889.1">
    <property type="nucleotide sequence ID" value="NC_009379.1"/>
</dbReference>
<dbReference type="SMR" id="A4SXQ0"/>
<dbReference type="GeneID" id="31481422"/>
<dbReference type="KEGG" id="pnu:Pnuc_1048"/>
<dbReference type="eggNOG" id="COG0649">
    <property type="taxonomic scope" value="Bacteria"/>
</dbReference>
<dbReference type="HOGENOM" id="CLU_015134_1_1_4"/>
<dbReference type="Proteomes" id="UP000000231">
    <property type="component" value="Chromosome"/>
</dbReference>
<dbReference type="GO" id="GO:0005886">
    <property type="term" value="C:plasma membrane"/>
    <property type="evidence" value="ECO:0007669"/>
    <property type="project" value="UniProtKB-SubCell"/>
</dbReference>
<dbReference type="GO" id="GO:0051287">
    <property type="term" value="F:NAD binding"/>
    <property type="evidence" value="ECO:0007669"/>
    <property type="project" value="InterPro"/>
</dbReference>
<dbReference type="GO" id="GO:0050136">
    <property type="term" value="F:NADH:ubiquinone reductase (non-electrogenic) activity"/>
    <property type="evidence" value="ECO:0007669"/>
    <property type="project" value="UniProtKB-UniRule"/>
</dbReference>
<dbReference type="GO" id="GO:0048038">
    <property type="term" value="F:quinone binding"/>
    <property type="evidence" value="ECO:0007669"/>
    <property type="project" value="UniProtKB-KW"/>
</dbReference>
<dbReference type="FunFam" id="1.10.645.10:FF:000005">
    <property type="entry name" value="NADH-quinone oxidoreductase subunit D"/>
    <property type="match status" value="1"/>
</dbReference>
<dbReference type="Gene3D" id="1.10.645.10">
    <property type="entry name" value="Cytochrome-c3 Hydrogenase, chain B"/>
    <property type="match status" value="1"/>
</dbReference>
<dbReference type="HAMAP" id="MF_01358">
    <property type="entry name" value="NDH1_NuoD"/>
    <property type="match status" value="1"/>
</dbReference>
<dbReference type="InterPro" id="IPR001135">
    <property type="entry name" value="NADH_Q_OxRdtase_suD"/>
</dbReference>
<dbReference type="InterPro" id="IPR014029">
    <property type="entry name" value="NADH_UbQ_OxRdtase_49kDa_CS"/>
</dbReference>
<dbReference type="InterPro" id="IPR022885">
    <property type="entry name" value="NDH1_su_D/H"/>
</dbReference>
<dbReference type="InterPro" id="IPR029014">
    <property type="entry name" value="NiFe-Hase_large"/>
</dbReference>
<dbReference type="NCBIfam" id="TIGR01962">
    <property type="entry name" value="NuoD"/>
    <property type="match status" value="1"/>
</dbReference>
<dbReference type="NCBIfam" id="NF004739">
    <property type="entry name" value="PRK06075.1"/>
    <property type="match status" value="1"/>
</dbReference>
<dbReference type="PANTHER" id="PTHR11993:SF10">
    <property type="entry name" value="NADH DEHYDROGENASE [UBIQUINONE] IRON-SULFUR PROTEIN 2, MITOCHONDRIAL"/>
    <property type="match status" value="1"/>
</dbReference>
<dbReference type="PANTHER" id="PTHR11993">
    <property type="entry name" value="NADH-UBIQUINONE OXIDOREDUCTASE 49 KDA SUBUNIT"/>
    <property type="match status" value="1"/>
</dbReference>
<dbReference type="Pfam" id="PF00346">
    <property type="entry name" value="Complex1_49kDa"/>
    <property type="match status" value="2"/>
</dbReference>
<dbReference type="SUPFAM" id="SSF56762">
    <property type="entry name" value="HydB/Nqo4-like"/>
    <property type="match status" value="1"/>
</dbReference>
<dbReference type="PROSITE" id="PS00535">
    <property type="entry name" value="COMPLEX1_49K"/>
    <property type="match status" value="1"/>
</dbReference>
<name>NUOD_POLAQ</name>
<gene>
    <name evidence="1" type="primary">nuoD</name>
    <name type="ordered locus">Pnuc_1048</name>
</gene>
<reference key="1">
    <citation type="journal article" date="2012" name="Stand. Genomic Sci.">
        <title>Complete genome sequence of Polynucleobacter necessarius subsp. asymbioticus type strain (QLW-P1DMWA-1(T)).</title>
        <authorList>
            <person name="Meincke L."/>
            <person name="Copeland A."/>
            <person name="Lapidus A."/>
            <person name="Lucas S."/>
            <person name="Berry K.W."/>
            <person name="Del Rio T.G."/>
            <person name="Hammon N."/>
            <person name="Dalin E."/>
            <person name="Tice H."/>
            <person name="Pitluck S."/>
            <person name="Richardson P."/>
            <person name="Bruce D."/>
            <person name="Goodwin L."/>
            <person name="Han C."/>
            <person name="Tapia R."/>
            <person name="Detter J.C."/>
            <person name="Schmutz J."/>
            <person name="Brettin T."/>
            <person name="Larimer F."/>
            <person name="Land M."/>
            <person name="Hauser L."/>
            <person name="Kyrpides N.C."/>
            <person name="Ivanova N."/>
            <person name="Goker M."/>
            <person name="Woyke T."/>
            <person name="Wu Q.L."/>
            <person name="Pockl M."/>
            <person name="Hahn M.W."/>
            <person name="Klenk H.P."/>
        </authorList>
    </citation>
    <scope>NUCLEOTIDE SEQUENCE [LARGE SCALE GENOMIC DNA]</scope>
    <source>
        <strain>DSM 18221 / CIP 109841 / QLW-P1DMWA-1</strain>
    </source>
</reference>